<name>RL25_WOLSU</name>
<keyword id="KW-1185">Reference proteome</keyword>
<keyword id="KW-0687">Ribonucleoprotein</keyword>
<keyword id="KW-0689">Ribosomal protein</keyword>
<keyword id="KW-0694">RNA-binding</keyword>
<keyword id="KW-0699">rRNA-binding</keyword>
<dbReference type="EMBL" id="BX571662">
    <property type="protein sequence ID" value="CAE11078.1"/>
    <property type="molecule type" value="Genomic_DNA"/>
</dbReference>
<dbReference type="RefSeq" id="WP_011139860.1">
    <property type="nucleotide sequence ID" value="NC_005090.1"/>
</dbReference>
<dbReference type="SMR" id="Q7M7U7"/>
<dbReference type="STRING" id="273121.WS2079"/>
<dbReference type="KEGG" id="wsu:WS2079"/>
<dbReference type="eggNOG" id="COG1825">
    <property type="taxonomic scope" value="Bacteria"/>
</dbReference>
<dbReference type="HOGENOM" id="CLU_075939_2_2_7"/>
<dbReference type="Proteomes" id="UP000000422">
    <property type="component" value="Chromosome"/>
</dbReference>
<dbReference type="GO" id="GO:0022625">
    <property type="term" value="C:cytosolic large ribosomal subunit"/>
    <property type="evidence" value="ECO:0007669"/>
    <property type="project" value="TreeGrafter"/>
</dbReference>
<dbReference type="GO" id="GO:0008097">
    <property type="term" value="F:5S rRNA binding"/>
    <property type="evidence" value="ECO:0007669"/>
    <property type="project" value="InterPro"/>
</dbReference>
<dbReference type="GO" id="GO:0003735">
    <property type="term" value="F:structural constituent of ribosome"/>
    <property type="evidence" value="ECO:0007669"/>
    <property type="project" value="InterPro"/>
</dbReference>
<dbReference type="GO" id="GO:0006412">
    <property type="term" value="P:translation"/>
    <property type="evidence" value="ECO:0007669"/>
    <property type="project" value="UniProtKB-UniRule"/>
</dbReference>
<dbReference type="CDD" id="cd00495">
    <property type="entry name" value="Ribosomal_L25_TL5_CTC"/>
    <property type="match status" value="1"/>
</dbReference>
<dbReference type="Gene3D" id="2.170.120.20">
    <property type="entry name" value="Ribosomal protein L25, beta domain"/>
    <property type="match status" value="1"/>
</dbReference>
<dbReference type="Gene3D" id="2.40.240.10">
    <property type="entry name" value="Ribosomal Protein L25, Chain P"/>
    <property type="match status" value="1"/>
</dbReference>
<dbReference type="HAMAP" id="MF_01334">
    <property type="entry name" value="Ribosomal_bL25_CTC"/>
    <property type="match status" value="1"/>
</dbReference>
<dbReference type="InterPro" id="IPR020056">
    <property type="entry name" value="Rbsml_bL25/Gln-tRNA_synth_N"/>
</dbReference>
<dbReference type="InterPro" id="IPR011035">
    <property type="entry name" value="Ribosomal_bL25/Gln-tRNA_synth"/>
</dbReference>
<dbReference type="InterPro" id="IPR020057">
    <property type="entry name" value="Ribosomal_bL25_b-dom"/>
</dbReference>
<dbReference type="InterPro" id="IPR037121">
    <property type="entry name" value="Ribosomal_bL25_C"/>
</dbReference>
<dbReference type="InterPro" id="IPR001021">
    <property type="entry name" value="Ribosomal_bL25_long"/>
</dbReference>
<dbReference type="InterPro" id="IPR029751">
    <property type="entry name" value="Ribosomal_L25_dom"/>
</dbReference>
<dbReference type="InterPro" id="IPR020930">
    <property type="entry name" value="Ribosomal_uL5_bac-type"/>
</dbReference>
<dbReference type="NCBIfam" id="TIGR00731">
    <property type="entry name" value="bL25_bact_ctc"/>
    <property type="match status" value="1"/>
</dbReference>
<dbReference type="NCBIfam" id="NF004129">
    <property type="entry name" value="PRK05618.1-4"/>
    <property type="match status" value="1"/>
</dbReference>
<dbReference type="PANTHER" id="PTHR33284">
    <property type="entry name" value="RIBOSOMAL PROTEIN L25/GLN-TRNA SYNTHETASE, ANTI-CODON-BINDING DOMAIN-CONTAINING PROTEIN"/>
    <property type="match status" value="1"/>
</dbReference>
<dbReference type="PANTHER" id="PTHR33284:SF1">
    <property type="entry name" value="RIBOSOMAL PROTEIN L25_GLN-TRNA SYNTHETASE, ANTI-CODON-BINDING DOMAIN-CONTAINING PROTEIN"/>
    <property type="match status" value="1"/>
</dbReference>
<dbReference type="Pfam" id="PF01386">
    <property type="entry name" value="Ribosomal_L25p"/>
    <property type="match status" value="1"/>
</dbReference>
<dbReference type="Pfam" id="PF14693">
    <property type="entry name" value="Ribosomal_TL5_C"/>
    <property type="match status" value="1"/>
</dbReference>
<dbReference type="SUPFAM" id="SSF50715">
    <property type="entry name" value="Ribosomal protein L25-like"/>
    <property type="match status" value="1"/>
</dbReference>
<protein>
    <recommendedName>
        <fullName evidence="1">Large ribosomal subunit protein bL25</fullName>
    </recommendedName>
    <alternativeName>
        <fullName evidence="2">50S ribosomal protein L25</fullName>
    </alternativeName>
    <alternativeName>
        <fullName evidence="1">General stress protein CTC</fullName>
    </alternativeName>
</protein>
<comment type="function">
    <text evidence="1">This is one of the proteins that binds to the 5S RNA in the ribosome where it forms part of the central protuberance.</text>
</comment>
<comment type="subunit">
    <text evidence="1">Part of the 50S ribosomal subunit; part of the 5S rRNA/L5/L18/L25 subcomplex. Contacts the 5S rRNA. Binds to the 5S rRNA independently of L5 and L18.</text>
</comment>
<comment type="similarity">
    <text evidence="1">Belongs to the bacterial ribosomal protein bL25 family. CTC subfamily.</text>
</comment>
<evidence type="ECO:0000255" key="1">
    <source>
        <dbReference type="HAMAP-Rule" id="MF_01334"/>
    </source>
</evidence>
<evidence type="ECO:0000305" key="2"/>
<organism>
    <name type="scientific">Wolinella succinogenes (strain ATCC 29543 / DSM 1740 / CCUG 13145 / JCM 31913 / LMG 7466 / NCTC 11488 / FDC 602W)</name>
    <name type="common">Vibrio succinogenes</name>
    <dbReference type="NCBI Taxonomy" id="273121"/>
    <lineage>
        <taxon>Bacteria</taxon>
        <taxon>Pseudomonadati</taxon>
        <taxon>Campylobacterota</taxon>
        <taxon>Epsilonproteobacteria</taxon>
        <taxon>Campylobacterales</taxon>
        <taxon>Helicobacteraceae</taxon>
        <taxon>Wolinella</taxon>
    </lineage>
</organism>
<sequence>MLEGIIRESISKSAVKALRNDGYLIANIYGKGQENTHCAFKKNDFIRAVKSKTNIIFPVKVGGKEINVVVQEYQKDPITSDLLHVDLMLVQPGVETKFLVPVKTAGSAKGLKNKGVLILSKKRVKVKCSPENLPASYELDVSDLDVGDAILVRDLPELPNVKVIEKESVAIVGVIKAK</sequence>
<accession>Q7M7U7</accession>
<gene>
    <name evidence="1" type="primary">rplY</name>
    <name evidence="1" type="synonym">ctc</name>
    <name type="ordered locus">WS2079</name>
</gene>
<feature type="chain" id="PRO_0000181616" description="Large ribosomal subunit protein bL25">
    <location>
        <begin position="1"/>
        <end position="178"/>
    </location>
</feature>
<reference key="1">
    <citation type="journal article" date="2003" name="Proc. Natl. Acad. Sci. U.S.A.">
        <title>Complete genome sequence and analysis of Wolinella succinogenes.</title>
        <authorList>
            <person name="Baar C."/>
            <person name="Eppinger M."/>
            <person name="Raddatz G."/>
            <person name="Simon J."/>
            <person name="Lanz C."/>
            <person name="Klimmek O."/>
            <person name="Nandakumar R."/>
            <person name="Gross R."/>
            <person name="Rosinus A."/>
            <person name="Keller H."/>
            <person name="Jagtap P."/>
            <person name="Linke B."/>
            <person name="Meyer F."/>
            <person name="Lederer H."/>
            <person name="Schuster S.C."/>
        </authorList>
    </citation>
    <scope>NUCLEOTIDE SEQUENCE [LARGE SCALE GENOMIC DNA]</scope>
    <source>
        <strain>ATCC 29543 / DSM 1740 / CCUG 13145 / JCM 31913 / LMG 7466 / NCTC 11488 / FDC 602W</strain>
    </source>
</reference>
<proteinExistence type="inferred from homology"/>